<organism>
    <name type="scientific">Nitrosomonas eutropha (strain DSM 101675 / C91 / Nm57)</name>
    <dbReference type="NCBI Taxonomy" id="335283"/>
    <lineage>
        <taxon>Bacteria</taxon>
        <taxon>Pseudomonadati</taxon>
        <taxon>Pseudomonadota</taxon>
        <taxon>Betaproteobacteria</taxon>
        <taxon>Nitrosomonadales</taxon>
        <taxon>Nitrosomonadaceae</taxon>
        <taxon>Nitrosomonas</taxon>
    </lineage>
</organism>
<feature type="chain" id="PRO_1000061543" description="Putative pre-16S rRNA nuclease">
    <location>
        <begin position="1"/>
        <end position="157"/>
    </location>
</feature>
<proteinExistence type="inferred from homology"/>
<reference key="1">
    <citation type="journal article" date="2007" name="Environ. Microbiol.">
        <title>Whole-genome analysis of the ammonia-oxidizing bacterium, Nitrosomonas eutropha C91: implications for niche adaptation.</title>
        <authorList>
            <person name="Stein L.Y."/>
            <person name="Arp D.J."/>
            <person name="Berube P.M."/>
            <person name="Chain P.S."/>
            <person name="Hauser L."/>
            <person name="Jetten M.S."/>
            <person name="Klotz M.G."/>
            <person name="Larimer F.W."/>
            <person name="Norton J.M."/>
            <person name="Op den Camp H.J.M."/>
            <person name="Shin M."/>
            <person name="Wei X."/>
        </authorList>
    </citation>
    <scope>NUCLEOTIDE SEQUENCE [LARGE SCALE GENOMIC DNA]</scope>
    <source>
        <strain>DSM 101675 / C91 / Nm57</strain>
    </source>
</reference>
<keyword id="KW-0963">Cytoplasm</keyword>
<keyword id="KW-0378">Hydrolase</keyword>
<keyword id="KW-0540">Nuclease</keyword>
<keyword id="KW-0690">Ribosome biogenesis</keyword>
<comment type="function">
    <text evidence="1">Could be a nuclease involved in processing of the 5'-end of pre-16S rRNA.</text>
</comment>
<comment type="subcellular location">
    <subcellularLocation>
        <location evidence="1">Cytoplasm</location>
    </subcellularLocation>
</comment>
<comment type="similarity">
    <text evidence="1">Belongs to the YqgF nuclease family.</text>
</comment>
<sequence length="157" mass="17535">MPDSAEETISDMASVILSGTVLAFDFGVRRIGVAIGEYELRLAHPLMTIDQAMTKPRFEKIAELIETWQPVLLVVGLSVHADGAEHEITRLCQRFARRLEGRFGIPVVMEDERYTTAIARLTLEEVGITGRKQRPMLDQIAAQHILQTFFDSSHAAS</sequence>
<evidence type="ECO:0000255" key="1">
    <source>
        <dbReference type="HAMAP-Rule" id="MF_00651"/>
    </source>
</evidence>
<accession>Q0AIU5</accession>
<gene>
    <name type="ordered locus">Neut_0449</name>
</gene>
<protein>
    <recommendedName>
        <fullName evidence="1">Putative pre-16S rRNA nuclease</fullName>
        <ecNumber evidence="1">3.1.-.-</ecNumber>
    </recommendedName>
</protein>
<name>YQGF_NITEC</name>
<dbReference type="EC" id="3.1.-.-" evidence="1"/>
<dbReference type="EMBL" id="CP000450">
    <property type="protein sequence ID" value="ABI58726.1"/>
    <property type="molecule type" value="Genomic_DNA"/>
</dbReference>
<dbReference type="RefSeq" id="WP_011633568.1">
    <property type="nucleotide sequence ID" value="NC_008344.1"/>
</dbReference>
<dbReference type="SMR" id="Q0AIU5"/>
<dbReference type="STRING" id="335283.Neut_0449"/>
<dbReference type="KEGG" id="net:Neut_0449"/>
<dbReference type="eggNOG" id="COG0816">
    <property type="taxonomic scope" value="Bacteria"/>
</dbReference>
<dbReference type="HOGENOM" id="CLU_098240_3_2_4"/>
<dbReference type="OrthoDB" id="9796140at2"/>
<dbReference type="Proteomes" id="UP000001966">
    <property type="component" value="Chromosome"/>
</dbReference>
<dbReference type="GO" id="GO:0005829">
    <property type="term" value="C:cytosol"/>
    <property type="evidence" value="ECO:0007669"/>
    <property type="project" value="TreeGrafter"/>
</dbReference>
<dbReference type="GO" id="GO:0004518">
    <property type="term" value="F:nuclease activity"/>
    <property type="evidence" value="ECO:0007669"/>
    <property type="project" value="UniProtKB-KW"/>
</dbReference>
<dbReference type="GO" id="GO:0000967">
    <property type="term" value="P:rRNA 5'-end processing"/>
    <property type="evidence" value="ECO:0007669"/>
    <property type="project" value="UniProtKB-UniRule"/>
</dbReference>
<dbReference type="CDD" id="cd16964">
    <property type="entry name" value="YqgF"/>
    <property type="match status" value="1"/>
</dbReference>
<dbReference type="Gene3D" id="3.30.420.140">
    <property type="entry name" value="YqgF/RNase H-like domain"/>
    <property type="match status" value="1"/>
</dbReference>
<dbReference type="HAMAP" id="MF_00651">
    <property type="entry name" value="Nuclease_YqgF"/>
    <property type="match status" value="1"/>
</dbReference>
<dbReference type="InterPro" id="IPR012337">
    <property type="entry name" value="RNaseH-like_sf"/>
</dbReference>
<dbReference type="InterPro" id="IPR005227">
    <property type="entry name" value="YqgF"/>
</dbReference>
<dbReference type="InterPro" id="IPR006641">
    <property type="entry name" value="YqgF/RNaseH-like_dom"/>
</dbReference>
<dbReference type="InterPro" id="IPR037027">
    <property type="entry name" value="YqgF/RNaseH-like_dom_sf"/>
</dbReference>
<dbReference type="NCBIfam" id="TIGR00250">
    <property type="entry name" value="RNAse_H_YqgF"/>
    <property type="match status" value="1"/>
</dbReference>
<dbReference type="PANTHER" id="PTHR33317">
    <property type="entry name" value="POLYNUCLEOTIDYL TRANSFERASE, RIBONUCLEASE H-LIKE SUPERFAMILY PROTEIN"/>
    <property type="match status" value="1"/>
</dbReference>
<dbReference type="PANTHER" id="PTHR33317:SF4">
    <property type="entry name" value="POLYNUCLEOTIDYL TRANSFERASE, RIBONUCLEASE H-LIKE SUPERFAMILY PROTEIN"/>
    <property type="match status" value="1"/>
</dbReference>
<dbReference type="Pfam" id="PF03652">
    <property type="entry name" value="RuvX"/>
    <property type="match status" value="1"/>
</dbReference>
<dbReference type="SMART" id="SM00732">
    <property type="entry name" value="YqgFc"/>
    <property type="match status" value="1"/>
</dbReference>
<dbReference type="SUPFAM" id="SSF53098">
    <property type="entry name" value="Ribonuclease H-like"/>
    <property type="match status" value="1"/>
</dbReference>